<reference key="1">
    <citation type="journal article" date="2007" name="DNA Res.">
        <title>Complete genomic structure of the bloom-forming toxic cyanobacterium Microcystis aeruginosa NIES-843.</title>
        <authorList>
            <person name="Kaneko T."/>
            <person name="Nakajima N."/>
            <person name="Okamoto S."/>
            <person name="Suzuki I."/>
            <person name="Tanabe Y."/>
            <person name="Tamaoki M."/>
            <person name="Nakamura Y."/>
            <person name="Kasai F."/>
            <person name="Watanabe A."/>
            <person name="Kawashima K."/>
            <person name="Kishida Y."/>
            <person name="Ono A."/>
            <person name="Shimizu Y."/>
            <person name="Takahashi C."/>
            <person name="Minami C."/>
            <person name="Fujishiro T."/>
            <person name="Kohara M."/>
            <person name="Katoh M."/>
            <person name="Nakazaki N."/>
            <person name="Nakayama S."/>
            <person name="Yamada M."/>
            <person name="Tabata S."/>
            <person name="Watanabe M.M."/>
        </authorList>
    </citation>
    <scope>NUCLEOTIDE SEQUENCE [LARGE SCALE GENOMIC DNA]</scope>
    <source>
        <strain>NIES-843 / IAM M-247</strain>
    </source>
</reference>
<feature type="chain" id="PRO_1000084625" description="tRNA pseudouridine synthase B">
    <location>
        <begin position="1"/>
        <end position="293"/>
    </location>
</feature>
<feature type="active site" description="Nucleophile" evidence="1">
    <location>
        <position position="38"/>
    </location>
</feature>
<sequence length="293" mass="32218">MFGFLNLNKPPDWTSHDCVAKVRKILKTKRVGHGGTLDPMATGVLPIAVGAATRLLAYLPENKAYRAKIQLGLSTDTDDITGKAIATCPWPDLTLEAVKPHLAEFIGNIAQIPPMYSAIHKDGRRLYELARKGEIIAVEPRQVKIDQITVLDWLEGEFPQIELDIHCGSGTYIRSLARDLGKVLAVGGTLASLTRTESCGFQLADSINLEALMVNSEGLISPRIALAHLDWISFTPERVIDWFHGRKINLTDTNVIIGSLVAVESLEAQFLGIGEIVVAEDEYYLQPKIVIQQ</sequence>
<comment type="function">
    <text evidence="1">Responsible for synthesis of pseudouridine from uracil-55 in the psi GC loop of transfer RNAs.</text>
</comment>
<comment type="catalytic activity">
    <reaction evidence="1">
        <text>uridine(55) in tRNA = pseudouridine(55) in tRNA</text>
        <dbReference type="Rhea" id="RHEA:42532"/>
        <dbReference type="Rhea" id="RHEA-COMP:10101"/>
        <dbReference type="Rhea" id="RHEA-COMP:10102"/>
        <dbReference type="ChEBI" id="CHEBI:65314"/>
        <dbReference type="ChEBI" id="CHEBI:65315"/>
        <dbReference type="EC" id="5.4.99.25"/>
    </reaction>
</comment>
<comment type="similarity">
    <text evidence="1">Belongs to the pseudouridine synthase TruB family. Type 1 subfamily.</text>
</comment>
<gene>
    <name evidence="1" type="primary">truB</name>
    <name type="ordered locus">MAE_28150</name>
</gene>
<dbReference type="EC" id="5.4.99.25" evidence="1"/>
<dbReference type="EMBL" id="AP009552">
    <property type="protein sequence ID" value="BAG02637.1"/>
    <property type="molecule type" value="Genomic_DNA"/>
</dbReference>
<dbReference type="RefSeq" id="WP_002798927.1">
    <property type="nucleotide sequence ID" value="NC_010296.1"/>
</dbReference>
<dbReference type="SMR" id="B0JJJ5"/>
<dbReference type="STRING" id="449447.MAE_28150"/>
<dbReference type="PaxDb" id="449447-MAE_28150"/>
<dbReference type="EnsemblBacteria" id="BAG02637">
    <property type="protein sequence ID" value="BAG02637"/>
    <property type="gene ID" value="MAE_28150"/>
</dbReference>
<dbReference type="KEGG" id="mar:MAE_28150"/>
<dbReference type="eggNOG" id="COG0130">
    <property type="taxonomic scope" value="Bacteria"/>
</dbReference>
<dbReference type="HOGENOM" id="CLU_032087_0_0_3"/>
<dbReference type="BioCyc" id="MAER449447:MAE_RS12280-MONOMER"/>
<dbReference type="Proteomes" id="UP000001510">
    <property type="component" value="Chromosome"/>
</dbReference>
<dbReference type="GO" id="GO:0003723">
    <property type="term" value="F:RNA binding"/>
    <property type="evidence" value="ECO:0007669"/>
    <property type="project" value="InterPro"/>
</dbReference>
<dbReference type="GO" id="GO:0160148">
    <property type="term" value="F:tRNA pseudouridine(55) synthase activity"/>
    <property type="evidence" value="ECO:0007669"/>
    <property type="project" value="UniProtKB-EC"/>
</dbReference>
<dbReference type="GO" id="GO:1990481">
    <property type="term" value="P:mRNA pseudouridine synthesis"/>
    <property type="evidence" value="ECO:0007669"/>
    <property type="project" value="TreeGrafter"/>
</dbReference>
<dbReference type="GO" id="GO:0031119">
    <property type="term" value="P:tRNA pseudouridine synthesis"/>
    <property type="evidence" value="ECO:0007669"/>
    <property type="project" value="UniProtKB-UniRule"/>
</dbReference>
<dbReference type="CDD" id="cd02573">
    <property type="entry name" value="PseudoU_synth_EcTruB"/>
    <property type="match status" value="1"/>
</dbReference>
<dbReference type="Gene3D" id="3.30.2350.10">
    <property type="entry name" value="Pseudouridine synthase"/>
    <property type="match status" value="1"/>
</dbReference>
<dbReference type="HAMAP" id="MF_01080">
    <property type="entry name" value="TruB_bact"/>
    <property type="match status" value="1"/>
</dbReference>
<dbReference type="InterPro" id="IPR020103">
    <property type="entry name" value="PsdUridine_synth_cat_dom_sf"/>
</dbReference>
<dbReference type="InterPro" id="IPR002501">
    <property type="entry name" value="PsdUridine_synth_N"/>
</dbReference>
<dbReference type="InterPro" id="IPR014780">
    <property type="entry name" value="tRNA_psdUridine_synth_TruB"/>
</dbReference>
<dbReference type="NCBIfam" id="TIGR00431">
    <property type="entry name" value="TruB"/>
    <property type="match status" value="1"/>
</dbReference>
<dbReference type="PANTHER" id="PTHR13767:SF2">
    <property type="entry name" value="PSEUDOURIDYLATE SYNTHASE TRUB1"/>
    <property type="match status" value="1"/>
</dbReference>
<dbReference type="PANTHER" id="PTHR13767">
    <property type="entry name" value="TRNA-PSEUDOURIDINE SYNTHASE"/>
    <property type="match status" value="1"/>
</dbReference>
<dbReference type="Pfam" id="PF01509">
    <property type="entry name" value="TruB_N"/>
    <property type="match status" value="1"/>
</dbReference>
<dbReference type="SUPFAM" id="SSF55120">
    <property type="entry name" value="Pseudouridine synthase"/>
    <property type="match status" value="1"/>
</dbReference>
<organism>
    <name type="scientific">Microcystis aeruginosa (strain NIES-843 / IAM M-2473)</name>
    <dbReference type="NCBI Taxonomy" id="449447"/>
    <lineage>
        <taxon>Bacteria</taxon>
        <taxon>Bacillati</taxon>
        <taxon>Cyanobacteriota</taxon>
        <taxon>Cyanophyceae</taxon>
        <taxon>Oscillatoriophycideae</taxon>
        <taxon>Chroococcales</taxon>
        <taxon>Microcystaceae</taxon>
        <taxon>Microcystis</taxon>
    </lineage>
</organism>
<name>TRUB_MICAN</name>
<protein>
    <recommendedName>
        <fullName evidence="1">tRNA pseudouridine synthase B</fullName>
        <ecNumber evidence="1">5.4.99.25</ecNumber>
    </recommendedName>
    <alternativeName>
        <fullName evidence="1">tRNA pseudouridine(55) synthase</fullName>
        <shortName evidence="1">Psi55 synthase</shortName>
    </alternativeName>
    <alternativeName>
        <fullName evidence="1">tRNA pseudouridylate synthase</fullName>
    </alternativeName>
    <alternativeName>
        <fullName evidence="1">tRNA-uridine isomerase</fullName>
    </alternativeName>
</protein>
<proteinExistence type="inferred from homology"/>
<keyword id="KW-0413">Isomerase</keyword>
<keyword id="KW-0819">tRNA processing</keyword>
<evidence type="ECO:0000255" key="1">
    <source>
        <dbReference type="HAMAP-Rule" id="MF_01080"/>
    </source>
</evidence>
<accession>B0JJJ5</accession>